<sequence length="132" mass="14532">MVMTDPIADYLTRIRNANMAKHDSVEIPASNIKKSISEILKREGFIRDYEVADDNKQGVIKVFLKYGPNGERVISGLKRISKPGLRNYVSAEDLPKVLNGLGIAIVSTSAGVITDKEARQKNVGGEVVAYVW</sequence>
<name>RS8_LACAC</name>
<reference key="1">
    <citation type="journal article" date="2005" name="Proc. Natl. Acad. Sci. U.S.A.">
        <title>Complete genome sequence of the probiotic lactic acid bacterium Lactobacillus acidophilus NCFM.</title>
        <authorList>
            <person name="Altermann E."/>
            <person name="Russell W.M."/>
            <person name="Azcarate-Peril M.A."/>
            <person name="Barrangou R."/>
            <person name="Buck B.L."/>
            <person name="McAuliffe O."/>
            <person name="Souther N."/>
            <person name="Dobson A."/>
            <person name="Duong T."/>
            <person name="Callanan M."/>
            <person name="Lick S."/>
            <person name="Hamrick A."/>
            <person name="Cano R."/>
            <person name="Klaenhammer T.R."/>
        </authorList>
    </citation>
    <scope>NUCLEOTIDE SEQUENCE [LARGE SCALE GENOMIC DNA]</scope>
    <source>
        <strain>ATCC 700396 / NCK56 / N2 / NCFM</strain>
    </source>
</reference>
<protein>
    <recommendedName>
        <fullName evidence="2">Small ribosomal subunit protein uS8</fullName>
    </recommendedName>
    <alternativeName>
        <fullName evidence="3">30S ribosomal protein S8</fullName>
    </alternativeName>
</protein>
<evidence type="ECO:0000250" key="1"/>
<evidence type="ECO:0000255" key="2">
    <source>
        <dbReference type="HAMAP-Rule" id="MF_01302"/>
    </source>
</evidence>
<evidence type="ECO:0000305" key="3"/>
<keyword id="KW-1185">Reference proteome</keyword>
<keyword id="KW-0687">Ribonucleoprotein</keyword>
<keyword id="KW-0689">Ribosomal protein</keyword>
<keyword id="KW-0694">RNA-binding</keyword>
<keyword id="KW-0699">rRNA-binding</keyword>
<organism>
    <name type="scientific">Lactobacillus acidophilus (strain ATCC 700396 / NCK56 / N2 / NCFM)</name>
    <dbReference type="NCBI Taxonomy" id="272621"/>
    <lineage>
        <taxon>Bacteria</taxon>
        <taxon>Bacillati</taxon>
        <taxon>Bacillota</taxon>
        <taxon>Bacilli</taxon>
        <taxon>Lactobacillales</taxon>
        <taxon>Lactobacillaceae</taxon>
        <taxon>Lactobacillus</taxon>
    </lineage>
</organism>
<accession>Q5FM77</accession>
<feature type="initiator methionine" description="Removed" evidence="1">
    <location>
        <position position="1"/>
    </location>
</feature>
<feature type="chain" id="PRO_0000126422" description="Small ribosomal subunit protein uS8">
    <location>
        <begin position="2"/>
        <end position="132"/>
    </location>
</feature>
<gene>
    <name evidence="2" type="primary">rpsH</name>
    <name type="ordered locus">LBA0304</name>
</gene>
<proteinExistence type="inferred from homology"/>
<comment type="function">
    <text evidence="2">One of the primary rRNA binding proteins, it binds directly to 16S rRNA central domain where it helps coordinate assembly of the platform of the 30S subunit.</text>
</comment>
<comment type="subunit">
    <text evidence="2">Part of the 30S ribosomal subunit. Contacts proteins S5 and S12.</text>
</comment>
<comment type="similarity">
    <text evidence="2">Belongs to the universal ribosomal protein uS8 family.</text>
</comment>
<dbReference type="EMBL" id="CP000033">
    <property type="protein sequence ID" value="AAV42197.1"/>
    <property type="molecule type" value="Genomic_DNA"/>
</dbReference>
<dbReference type="RefSeq" id="WP_003549038.1">
    <property type="nucleotide sequence ID" value="NC_006814.3"/>
</dbReference>
<dbReference type="RefSeq" id="YP_193228.1">
    <property type="nucleotide sequence ID" value="NC_006814.3"/>
</dbReference>
<dbReference type="SMR" id="Q5FM77"/>
<dbReference type="STRING" id="272621.LBA0304"/>
<dbReference type="GeneID" id="93290587"/>
<dbReference type="KEGG" id="lac:LBA0304"/>
<dbReference type="PATRIC" id="fig|272621.13.peg.291"/>
<dbReference type="eggNOG" id="COG0096">
    <property type="taxonomic scope" value="Bacteria"/>
</dbReference>
<dbReference type="HOGENOM" id="CLU_098428_0_2_9"/>
<dbReference type="OrthoDB" id="9802617at2"/>
<dbReference type="BioCyc" id="LACI272621:G1G49-299-MONOMER"/>
<dbReference type="Proteomes" id="UP000006381">
    <property type="component" value="Chromosome"/>
</dbReference>
<dbReference type="GO" id="GO:1990904">
    <property type="term" value="C:ribonucleoprotein complex"/>
    <property type="evidence" value="ECO:0007669"/>
    <property type="project" value="UniProtKB-KW"/>
</dbReference>
<dbReference type="GO" id="GO:0005840">
    <property type="term" value="C:ribosome"/>
    <property type="evidence" value="ECO:0007669"/>
    <property type="project" value="UniProtKB-KW"/>
</dbReference>
<dbReference type="GO" id="GO:0019843">
    <property type="term" value="F:rRNA binding"/>
    <property type="evidence" value="ECO:0007669"/>
    <property type="project" value="UniProtKB-UniRule"/>
</dbReference>
<dbReference type="GO" id="GO:0003735">
    <property type="term" value="F:structural constituent of ribosome"/>
    <property type="evidence" value="ECO:0007669"/>
    <property type="project" value="InterPro"/>
</dbReference>
<dbReference type="GO" id="GO:0006412">
    <property type="term" value="P:translation"/>
    <property type="evidence" value="ECO:0007669"/>
    <property type="project" value="UniProtKB-UniRule"/>
</dbReference>
<dbReference type="FunFam" id="3.30.1370.30:FF:000002">
    <property type="entry name" value="30S ribosomal protein S8"/>
    <property type="match status" value="1"/>
</dbReference>
<dbReference type="FunFam" id="3.30.1490.10:FF:000001">
    <property type="entry name" value="30S ribosomal protein S8"/>
    <property type="match status" value="1"/>
</dbReference>
<dbReference type="Gene3D" id="3.30.1370.30">
    <property type="match status" value="1"/>
</dbReference>
<dbReference type="Gene3D" id="3.30.1490.10">
    <property type="match status" value="1"/>
</dbReference>
<dbReference type="HAMAP" id="MF_01302_B">
    <property type="entry name" value="Ribosomal_uS8_B"/>
    <property type="match status" value="1"/>
</dbReference>
<dbReference type="InterPro" id="IPR000630">
    <property type="entry name" value="Ribosomal_uS8"/>
</dbReference>
<dbReference type="InterPro" id="IPR047863">
    <property type="entry name" value="Ribosomal_uS8_CS"/>
</dbReference>
<dbReference type="InterPro" id="IPR035987">
    <property type="entry name" value="Ribosomal_uS8_sf"/>
</dbReference>
<dbReference type="NCBIfam" id="NF001109">
    <property type="entry name" value="PRK00136.1"/>
    <property type="match status" value="1"/>
</dbReference>
<dbReference type="PANTHER" id="PTHR11758">
    <property type="entry name" value="40S RIBOSOMAL PROTEIN S15A"/>
    <property type="match status" value="1"/>
</dbReference>
<dbReference type="Pfam" id="PF00410">
    <property type="entry name" value="Ribosomal_S8"/>
    <property type="match status" value="1"/>
</dbReference>
<dbReference type="SUPFAM" id="SSF56047">
    <property type="entry name" value="Ribosomal protein S8"/>
    <property type="match status" value="1"/>
</dbReference>
<dbReference type="PROSITE" id="PS00053">
    <property type="entry name" value="RIBOSOMAL_S8"/>
    <property type="match status" value="1"/>
</dbReference>